<protein>
    <recommendedName>
        <fullName evidence="1">Envelope glycoprotein H</fullName>
        <shortName evidence="1">gH</shortName>
    </recommendedName>
</protein>
<feature type="signal peptide" evidence="1">
    <location>
        <begin position="1"/>
        <end position="24"/>
    </location>
</feature>
<feature type="chain" id="PRO_0000038249" description="Envelope glycoprotein H" evidence="1">
    <location>
        <begin position="25"/>
        <end position="686"/>
    </location>
</feature>
<feature type="topological domain" description="Virion surface" evidence="1">
    <location>
        <begin position="25"/>
        <end position="646"/>
    </location>
</feature>
<feature type="transmembrane region" description="Helical" evidence="1">
    <location>
        <begin position="647"/>
        <end position="667"/>
    </location>
</feature>
<feature type="topological domain" description="Intravirion" evidence="1">
    <location>
        <begin position="668"/>
        <end position="686"/>
    </location>
</feature>
<feature type="region of interest" description="Interaction with gL" evidence="1">
    <location>
        <begin position="157"/>
        <end position="217"/>
    </location>
</feature>
<feature type="glycosylation site" description="N-linked (GlcNAc...) asparagine; by host" evidence="1">
    <location>
        <position position="77"/>
    </location>
</feature>
<feature type="glycosylation site" description="N-linked (GlcNAc...) asparagine; by host" evidence="1">
    <location>
        <position position="162"/>
    </location>
</feature>
<feature type="glycosylation site" description="N-linked (GlcNAc...) asparagine; by host" evidence="1">
    <location>
        <position position="542"/>
    </location>
</feature>
<feature type="glycosylation site" description="N-linked (GlcNAc...) asparagine; by host" evidence="1">
    <location>
        <position position="604"/>
    </location>
</feature>
<feature type="glycosylation site" description="N-linked (GlcNAc...) asparagine; by host" evidence="1">
    <location>
        <position position="627"/>
    </location>
</feature>
<feature type="strand" evidence="2">
    <location>
        <begin position="148"/>
        <end position="155"/>
    </location>
</feature>
<feature type="strand" evidence="2">
    <location>
        <begin position="157"/>
        <end position="166"/>
    </location>
</feature>
<feature type="strand" evidence="2">
    <location>
        <begin position="169"/>
        <end position="176"/>
    </location>
</feature>
<feature type="strand" evidence="2">
    <location>
        <begin position="182"/>
        <end position="189"/>
    </location>
</feature>
<feature type="strand" evidence="2">
    <location>
        <begin position="213"/>
        <end position="219"/>
    </location>
</feature>
<feature type="helix" evidence="2">
    <location>
        <begin position="223"/>
        <end position="238"/>
    </location>
</feature>
<feature type="helix" evidence="2">
    <location>
        <begin position="243"/>
        <end position="259"/>
    </location>
</feature>
<feature type="helix" evidence="2">
    <location>
        <begin position="263"/>
        <end position="286"/>
    </location>
</feature>
<feature type="helix" evidence="2">
    <location>
        <begin position="288"/>
        <end position="291"/>
    </location>
</feature>
<feature type="helix" evidence="2">
    <location>
        <begin position="292"/>
        <end position="294"/>
    </location>
</feature>
<feature type="helix" evidence="2">
    <location>
        <begin position="295"/>
        <end position="312"/>
    </location>
</feature>
<feature type="helix" evidence="2">
    <location>
        <begin position="326"/>
        <end position="329"/>
    </location>
</feature>
<feature type="helix" evidence="2">
    <location>
        <begin position="334"/>
        <end position="336"/>
    </location>
</feature>
<feature type="helix" evidence="2">
    <location>
        <begin position="337"/>
        <end position="344"/>
    </location>
</feature>
<feature type="helix" evidence="2">
    <location>
        <begin position="349"/>
        <end position="351"/>
    </location>
</feature>
<feature type="helix" evidence="2">
    <location>
        <begin position="352"/>
        <end position="367"/>
    </location>
</feature>
<feature type="helix" evidence="2">
    <location>
        <begin position="374"/>
        <end position="387"/>
    </location>
</feature>
<feature type="helix" evidence="2">
    <location>
        <begin position="392"/>
        <end position="403"/>
    </location>
</feature>
<feature type="helix" evidence="2">
    <location>
        <begin position="406"/>
        <end position="420"/>
    </location>
</feature>
<feature type="helix" evidence="2">
    <location>
        <begin position="433"/>
        <end position="436"/>
    </location>
</feature>
<feature type="helix" evidence="2">
    <location>
        <begin position="439"/>
        <end position="441"/>
    </location>
</feature>
<feature type="strand" evidence="2">
    <location>
        <begin position="442"/>
        <end position="444"/>
    </location>
</feature>
<feature type="helix" evidence="2">
    <location>
        <begin position="455"/>
        <end position="463"/>
    </location>
</feature>
<feature type="helix" evidence="2">
    <location>
        <begin position="487"/>
        <end position="491"/>
    </location>
</feature>
<feature type="strand" evidence="2">
    <location>
        <begin position="500"/>
        <end position="504"/>
    </location>
</feature>
<feature type="strand" evidence="2">
    <location>
        <begin position="506"/>
        <end position="516"/>
    </location>
</feature>
<feature type="strand" evidence="2">
    <location>
        <begin position="523"/>
        <end position="525"/>
    </location>
</feature>
<feature type="strand" evidence="2">
    <location>
        <begin position="536"/>
        <end position="541"/>
    </location>
</feature>
<feature type="strand" evidence="2">
    <location>
        <begin position="574"/>
        <end position="579"/>
    </location>
</feature>
<feature type="strand" evidence="2">
    <location>
        <begin position="584"/>
        <end position="589"/>
    </location>
</feature>
<feature type="helix" evidence="2">
    <location>
        <begin position="593"/>
        <end position="600"/>
    </location>
</feature>
<feature type="strand" evidence="2">
    <location>
        <begin position="610"/>
        <end position="612"/>
    </location>
</feature>
<feature type="strand" evidence="2">
    <location>
        <begin position="619"/>
        <end position="624"/>
    </location>
</feature>
<feature type="strand" evidence="2">
    <location>
        <begin position="629"/>
        <end position="632"/>
    </location>
</feature>
<reference key="1">
    <citation type="journal article" date="1991" name="Virology">
        <title>Sequence and expression of the glycoprotein gH gene of pseudorabies virus.</title>
        <authorList>
            <person name="Klupp B.G."/>
            <person name="Mettenleiter T.C."/>
        </authorList>
    </citation>
    <scope>NUCLEOTIDE SEQUENCE [GENOMIC DNA]</scope>
</reference>
<proteinExistence type="evidence at protein level"/>
<sequence length="686" mass="71952">MPASSVRLPLRLLTLAGLLALAGAAALARGAPQGGPPSPQGGPAPTAAPARGPTLFVLVGDGSAWFVFQLGGLGALNDTRIRGHLLGRYLVSYQVVPPPVSAWYFVQRPRERPRLSGPPSGAELVAFDAPGVRRTYTTAAVWPAEVAVLADAEARCPAAVFNVTLGEAFLGLRVALRSFLPLEVIISAERMRMIAPPALGSDLEPPGPPAGRFHVYTLGFLSDGAMHQTMRDVAAYVHESDDYLAQLSAAHAAALAAVVQPGPYYFYRAAVRLGVAAFVFSEAARRDRRASAPALLRVESDARLLSRLLMRAAGCPAGFAGLFDGRAERVPVAPADQLRAAWTFGEDPAPRLDLARATVAEAYRRSVRGKPFDQQALFFAVALLLRAGGPGDARETLLRTTAMCTAERAAAAAELTRAALSPTAAWNEPFSLLDVLSPCAVSLRRDLGGDATLANLGAAARLALAPAGAPGAAAATDEGAEEEEEDPVARAAPEIPAEALLALPLRGGASFVFTRRRPDCGPAYTLGGVDIANPLVLAIVSNDSAACDYTDRMPESQHLPATDNPSVCVYCDCVFVRYSSAGTILETVLIESKDMEEQLMAGANSTIPSFNPTLHGGDVKALMLFPNGTVVDLLSFTSTRLAPVSPAYVVASVVGAAITVGILYALFKMLCSFSSEGYSRLINARS</sequence>
<gene>
    <name evidence="1" type="primary">gH</name>
</gene>
<organismHost>
    <name type="scientific">Sus scrofa</name>
    <name type="common">Pig</name>
    <dbReference type="NCBI Taxonomy" id="9823"/>
</organismHost>
<dbReference type="EMBL" id="M61196">
    <property type="protein sequence ID" value="AAA47466.1"/>
    <property type="molecule type" value="Genomic_DNA"/>
</dbReference>
<dbReference type="PIR" id="A39990">
    <property type="entry name" value="VGBEPK"/>
</dbReference>
<dbReference type="PDB" id="2XQY">
    <property type="method" value="X-ray"/>
    <property type="resolution" value="2.05 A"/>
    <property type="chains" value="A/E=107-639"/>
</dbReference>
<dbReference type="PDBsum" id="2XQY"/>
<dbReference type="SMR" id="P27416"/>
<dbReference type="GlyCosmos" id="P27416">
    <property type="glycosylation" value="5 sites, No reported glycans"/>
</dbReference>
<dbReference type="ABCD" id="P27416">
    <property type="antibodies" value="1 sequenced antibody"/>
</dbReference>
<dbReference type="KEGG" id="vg:2952560"/>
<dbReference type="EvolutionaryTrace" id="P27416"/>
<dbReference type="GO" id="GO:0044175">
    <property type="term" value="C:host cell endosome membrane"/>
    <property type="evidence" value="ECO:0007669"/>
    <property type="project" value="UniProtKB-SubCell"/>
</dbReference>
<dbReference type="GO" id="GO:0020002">
    <property type="term" value="C:host cell plasma membrane"/>
    <property type="evidence" value="ECO:0007669"/>
    <property type="project" value="UniProtKB-SubCell"/>
</dbReference>
<dbReference type="GO" id="GO:0016020">
    <property type="term" value="C:membrane"/>
    <property type="evidence" value="ECO:0007669"/>
    <property type="project" value="UniProtKB-KW"/>
</dbReference>
<dbReference type="GO" id="GO:0019031">
    <property type="term" value="C:viral envelope"/>
    <property type="evidence" value="ECO:0007669"/>
    <property type="project" value="UniProtKB-KW"/>
</dbReference>
<dbReference type="GO" id="GO:0055036">
    <property type="term" value="C:virion membrane"/>
    <property type="evidence" value="ECO:0007669"/>
    <property type="project" value="UniProtKB-SubCell"/>
</dbReference>
<dbReference type="GO" id="GO:0019064">
    <property type="term" value="P:fusion of virus membrane with host plasma membrane"/>
    <property type="evidence" value="ECO:0007669"/>
    <property type="project" value="UniProtKB-KW"/>
</dbReference>
<dbReference type="GO" id="GO:0046718">
    <property type="term" value="P:symbiont entry into host cell"/>
    <property type="evidence" value="ECO:0007669"/>
    <property type="project" value="UniProtKB-KW"/>
</dbReference>
<dbReference type="Gene3D" id="1.20.58.1340">
    <property type="match status" value="1"/>
</dbReference>
<dbReference type="Gene3D" id="3.30.500.50">
    <property type="match status" value="1"/>
</dbReference>
<dbReference type="Gene3D" id="2.60.40.3190">
    <property type="entry name" value="Herpesvirus glycoprotein H, C-terminal domain"/>
    <property type="match status" value="1"/>
</dbReference>
<dbReference type="HAMAP" id="MF_04033">
    <property type="entry name" value="HSV_GH"/>
    <property type="match status" value="1"/>
</dbReference>
<dbReference type="InterPro" id="IPR003493">
    <property type="entry name" value="Herpes_gH"/>
</dbReference>
<dbReference type="InterPro" id="IPR035305">
    <property type="entry name" value="Herpes_glycoH_C"/>
</dbReference>
<dbReference type="InterPro" id="IPR038172">
    <property type="entry name" value="Herpes_glycoH_C_sf"/>
</dbReference>
<dbReference type="Pfam" id="PF17488">
    <property type="entry name" value="Herpes_glycoH_C"/>
    <property type="match status" value="1"/>
</dbReference>
<comment type="function">
    <text evidence="1">The heterodimer glycoprotein H-glycoprotein L is required for the fusion of viral and plasma membranes leading to virus entry into the host cell. Following initial binding to host receptor, membrane fusion is mediated by the fusion machinery composed of gB and the heterodimer gH/gL. May also be involved in the fusion between the virion envelope and the outer nuclear membrane during virion morphogenesis.</text>
</comment>
<comment type="subunit">
    <text evidence="1">Interacts with glycoprotein L (gL); this interaction is necessary for the correct processing and cell surface expression of gH. The heterodimer gH/gL seems to interact with gB trimers during fusion.</text>
</comment>
<comment type="subcellular location">
    <subcellularLocation>
        <location evidence="1">Virion membrane</location>
        <topology evidence="1">Single-pass type I membrane protein</topology>
    </subcellularLocation>
    <subcellularLocation>
        <location evidence="1">Host cell membrane</location>
        <topology evidence="1">Single-pass type I membrane protein</topology>
    </subcellularLocation>
    <subcellularLocation>
        <location evidence="1">Host endosome membrane</location>
        <topology evidence="1">Single-pass type I membrane protein</topology>
    </subcellularLocation>
    <text evidence="1">During virion morphogenesis, this protein probably accumulates in the endosomes and trans-Golgi where secondary envelopment occurs. It is probably transported to the cell surface from where it is endocytosed and directed to the trans-Golgi network (TGN).</text>
</comment>
<comment type="PTM">
    <text evidence="1">N-glycosylated, O-glycosylated, and sialylated.</text>
</comment>
<comment type="similarity">
    <text evidence="1">Belongs to the herpesviridae glycoprotein H family.</text>
</comment>
<organism>
    <name type="scientific">Suid herpesvirus 1 (strain Kaplan)</name>
    <name type="common">SuHV-1</name>
    <name type="synonym">Pseudorabies virus (strain Kaplan)</name>
    <dbReference type="NCBI Taxonomy" id="33703"/>
    <lineage>
        <taxon>Viruses</taxon>
        <taxon>Duplodnaviria</taxon>
        <taxon>Heunggongvirae</taxon>
        <taxon>Peploviricota</taxon>
        <taxon>Herviviricetes</taxon>
        <taxon>Herpesvirales</taxon>
        <taxon>Orthoherpesviridae</taxon>
        <taxon>Alphaherpesvirinae</taxon>
        <taxon>Varicellovirus</taxon>
        <taxon>Varicellovirus suidalpha1</taxon>
        <taxon>Suid herpesvirus 1</taxon>
    </lineage>
</organism>
<evidence type="ECO:0000255" key="1">
    <source>
        <dbReference type="HAMAP-Rule" id="MF_04033"/>
    </source>
</evidence>
<evidence type="ECO:0007829" key="2">
    <source>
        <dbReference type="PDB" id="2XQY"/>
    </source>
</evidence>
<name>GH_SUHVK</name>
<accession>P27416</accession>
<keyword id="KW-0002">3D-structure</keyword>
<keyword id="KW-1169">Fusion of virus membrane with host cell membrane</keyword>
<keyword id="KW-1168">Fusion of virus membrane with host membrane</keyword>
<keyword id="KW-0325">Glycoprotein</keyword>
<keyword id="KW-1032">Host cell membrane</keyword>
<keyword id="KW-1039">Host endosome</keyword>
<keyword id="KW-1043">Host membrane</keyword>
<keyword id="KW-0472">Membrane</keyword>
<keyword id="KW-0730">Sialic acid</keyword>
<keyword id="KW-0732">Signal</keyword>
<keyword id="KW-0812">Transmembrane</keyword>
<keyword id="KW-1133">Transmembrane helix</keyword>
<keyword id="KW-0261">Viral envelope protein</keyword>
<keyword id="KW-1162">Viral penetration into host cytoplasm</keyword>
<keyword id="KW-0946">Virion</keyword>
<keyword id="KW-1160">Virus entry into host cell</keyword>